<reference key="1">
    <citation type="journal article" date="2009" name="Genome Res.">
        <title>Comparative genomic analyses of the human fungal pathogens Coccidioides and their relatives.</title>
        <authorList>
            <person name="Sharpton T.J."/>
            <person name="Stajich J.E."/>
            <person name="Rounsley S.D."/>
            <person name="Gardner M.J."/>
            <person name="Wortman J.R."/>
            <person name="Jordar V.S."/>
            <person name="Maiti R."/>
            <person name="Kodira C.D."/>
            <person name="Neafsey D.E."/>
            <person name="Zeng Q."/>
            <person name="Hung C.-Y."/>
            <person name="McMahan C."/>
            <person name="Muszewska A."/>
            <person name="Grynberg M."/>
            <person name="Mandel M.A."/>
            <person name="Kellner E.M."/>
            <person name="Barker B.M."/>
            <person name="Galgiani J.N."/>
            <person name="Orbach M.J."/>
            <person name="Kirkland T.N."/>
            <person name="Cole G.T."/>
            <person name="Henn M.R."/>
            <person name="Birren B.W."/>
            <person name="Taylor J.W."/>
        </authorList>
    </citation>
    <scope>NUCLEOTIDE SEQUENCE [LARGE SCALE GENOMIC DNA]</scope>
    <source>
        <strain>UAMH 1704</strain>
    </source>
</reference>
<accession>C4JQ45</accession>
<organism>
    <name type="scientific">Uncinocarpus reesii (strain UAMH 1704)</name>
    <dbReference type="NCBI Taxonomy" id="336963"/>
    <lineage>
        <taxon>Eukaryota</taxon>
        <taxon>Fungi</taxon>
        <taxon>Dikarya</taxon>
        <taxon>Ascomycota</taxon>
        <taxon>Pezizomycotina</taxon>
        <taxon>Eurotiomycetes</taxon>
        <taxon>Eurotiomycetidae</taxon>
        <taxon>Onygenales</taxon>
        <taxon>Onygenaceae</taxon>
        <taxon>Uncinocarpus</taxon>
    </lineage>
</organism>
<name>MDM34_UNCRE</name>
<evidence type="ECO:0000255" key="1">
    <source>
        <dbReference type="HAMAP-Rule" id="MF_03105"/>
    </source>
</evidence>
<evidence type="ECO:0000256" key="2">
    <source>
        <dbReference type="SAM" id="MobiDB-lite"/>
    </source>
</evidence>
<evidence type="ECO:0000305" key="3"/>
<sequence length="573" mass="62088">MAFNFNWSPLMADAGFYTRAQDLLTAALNKSPKPPIIVDDIAVTELNLGSIPPELEILEVGDLAEDRFRGIFKMSYSGDAFLTLKTRVQANPLNTFLITRPAYASPKPLAAASGLTIPLQITLSNFRLSGFVVLVFSKQKGITVVFRNDPLESLKVSSTFDSIPSVRDYLQREIEGQLRILFMDELPAIIHRLSLRLWVPEYRGLEAGIPETAIPSSLGPGEDTLLNPPKDPVDASGNLLSSAEIASLSLDSGVEMHSLFSQKNLLRLAALTNSQRTLSLFTPSIREVMFRARTGLADQGEGLGSGLMSPGSPALSRTHSHISSPLSSFQDSSSVLSLQQRSTTAASSFSGYGLSLGAGRHTKARPTKKRKKRVVDLRKQSKPTDPEITSADGGYTETSTASTTFSSSTVPEEVNDDPVTPPLSPETTIRFPNRQHRFSTSEGKVIARAPAQQLTYSEPSHSALHTQTANPVPAVPLHAEGAAVPPQQALVFGDEHLGSREKSMEAQSSHGPNPGLSITDAAPNSSILEQAWMMKMANEIARRIQEQNSLVNNNYPGPWEQTRARTPPPAYGQ</sequence>
<proteinExistence type="inferred from homology"/>
<gene>
    <name evidence="1" type="primary">MDM34</name>
    <name type="ORF">UREG_03278</name>
</gene>
<comment type="function">
    <text evidence="1">Component of the ERMES/MDM complex, which serves as a molecular tether to connect the endoplasmic reticulum (ER) and mitochondria. Components of this complex are involved in the control of mitochondrial shape and protein biogenesis, and function in nonvesicular lipid trafficking between the ER and mitochondria. MDM34 is required for the interaction of the ER-resident membrane protein MMM1 and the outer mitochondrial membrane-resident beta-barrel protein MDM10.</text>
</comment>
<comment type="subunit">
    <text evidence="1">Component of the ER-mitochondria encounter structure (ERMES) or MDM complex, composed of MMM1, MDM10, MDM12 and MDM34.</text>
</comment>
<comment type="subcellular location">
    <subcellularLocation>
        <location evidence="1">Mitochondrion outer membrane</location>
        <topology evidence="1">Multi-pass membrane protein</topology>
    </subcellularLocation>
    <text evidence="1">The ERMES/MDM complex localizes to a few discrete foci (around 10 per single cell), that represent mitochondria-endoplasmic reticulum junctions. These foci are often found next to mtDNA nucleoids.</text>
</comment>
<comment type="domain">
    <text evidence="1">Lacks alpha-helical transmembrane segments, suggesting that it resides in the membrane via beta-sheet conformations similar to those predicted for other outer membrane proteins and porin.</text>
</comment>
<comment type="domain">
    <text evidence="1">The SMP-LTD domain is a barrel-like domain that can bind various types of glycerophospholipids in its interior and mediate their transfer between two adjacent bilayers.</text>
</comment>
<comment type="similarity">
    <text evidence="1">Belongs to the MDM34 family.</text>
</comment>
<comment type="sequence caution" evidence="3">
    <conflict type="erroneous gene model prediction">
        <sequence resource="EMBL-CDS" id="EEP78432"/>
    </conflict>
</comment>
<dbReference type="EMBL" id="CH476616">
    <property type="protein sequence ID" value="EEP78432.1"/>
    <property type="status" value="ALT_SEQ"/>
    <property type="molecule type" value="Genomic_DNA"/>
</dbReference>
<dbReference type="RefSeq" id="XP_002543761.1">
    <property type="nucleotide sequence ID" value="XM_002543715.1"/>
</dbReference>
<dbReference type="SMR" id="C4JQ45"/>
<dbReference type="STRING" id="336963.C4JQ45"/>
<dbReference type="GeneID" id="8442761"/>
<dbReference type="KEGG" id="ure:UREG_03278"/>
<dbReference type="VEuPathDB" id="FungiDB:UREG_03278"/>
<dbReference type="eggNOG" id="ENOG502QT3W">
    <property type="taxonomic scope" value="Eukaryota"/>
</dbReference>
<dbReference type="HOGENOM" id="CLU_036502_1_0_1"/>
<dbReference type="InParanoid" id="C4JQ45"/>
<dbReference type="OrthoDB" id="17927at2759"/>
<dbReference type="Proteomes" id="UP000002058">
    <property type="component" value="Unassembled WGS sequence"/>
</dbReference>
<dbReference type="GO" id="GO:0032865">
    <property type="term" value="C:ERMES complex"/>
    <property type="evidence" value="ECO:0007669"/>
    <property type="project" value="UniProtKB-UniRule"/>
</dbReference>
<dbReference type="GO" id="GO:0008289">
    <property type="term" value="F:lipid binding"/>
    <property type="evidence" value="ECO:0007669"/>
    <property type="project" value="UniProtKB-KW"/>
</dbReference>
<dbReference type="GO" id="GO:0000002">
    <property type="term" value="P:mitochondrial genome maintenance"/>
    <property type="evidence" value="ECO:0007669"/>
    <property type="project" value="UniProtKB-UniRule"/>
</dbReference>
<dbReference type="GO" id="GO:1990456">
    <property type="term" value="P:mitochondrion-endoplasmic reticulum membrane tethering"/>
    <property type="evidence" value="ECO:0007669"/>
    <property type="project" value="TreeGrafter"/>
</dbReference>
<dbReference type="GO" id="GO:0015914">
    <property type="term" value="P:phospholipid transport"/>
    <property type="evidence" value="ECO:0007669"/>
    <property type="project" value="TreeGrafter"/>
</dbReference>
<dbReference type="CDD" id="cd21673">
    <property type="entry name" value="SMP_Mdm34"/>
    <property type="match status" value="1"/>
</dbReference>
<dbReference type="HAMAP" id="MF_03105">
    <property type="entry name" value="Mdm34"/>
    <property type="match status" value="1"/>
</dbReference>
<dbReference type="InterPro" id="IPR027536">
    <property type="entry name" value="Mdm34"/>
</dbReference>
<dbReference type="InterPro" id="IPR031468">
    <property type="entry name" value="SMP_LBD"/>
</dbReference>
<dbReference type="PANTHER" id="PTHR28185">
    <property type="entry name" value="MITOCHONDRIAL DISTRIBUTION AND MORPHOLOGY PROTEIN 34"/>
    <property type="match status" value="1"/>
</dbReference>
<dbReference type="PANTHER" id="PTHR28185:SF1">
    <property type="entry name" value="MITOCHONDRIAL DISTRIBUTION AND MORPHOLOGY PROTEIN 34"/>
    <property type="match status" value="1"/>
</dbReference>
<dbReference type="PROSITE" id="PS51847">
    <property type="entry name" value="SMP"/>
    <property type="match status" value="1"/>
</dbReference>
<protein>
    <recommendedName>
        <fullName evidence="1">Mitochondrial distribution and morphology protein 34</fullName>
    </recommendedName>
</protein>
<keyword id="KW-0445">Lipid transport</keyword>
<keyword id="KW-0446">Lipid-binding</keyword>
<keyword id="KW-0472">Membrane</keyword>
<keyword id="KW-0496">Mitochondrion</keyword>
<keyword id="KW-1000">Mitochondrion outer membrane</keyword>
<keyword id="KW-1185">Reference proteome</keyword>
<keyword id="KW-0812">Transmembrane</keyword>
<keyword id="KW-1134">Transmembrane beta strand</keyword>
<keyword id="KW-0813">Transport</keyword>
<feature type="chain" id="PRO_0000384366" description="Mitochondrial distribution and morphology protein 34">
    <location>
        <begin position="1"/>
        <end position="573"/>
    </location>
</feature>
<feature type="domain" description="SMP-LTD" evidence="1">
    <location>
        <begin position="1"/>
        <end position="195"/>
    </location>
</feature>
<feature type="region of interest" description="Disordered" evidence="2">
    <location>
        <begin position="301"/>
        <end position="326"/>
    </location>
</feature>
<feature type="region of interest" description="Disordered" evidence="2">
    <location>
        <begin position="349"/>
        <end position="433"/>
    </location>
</feature>
<feature type="region of interest" description="Disordered" evidence="2">
    <location>
        <begin position="499"/>
        <end position="521"/>
    </location>
</feature>
<feature type="region of interest" description="Disordered" evidence="2">
    <location>
        <begin position="550"/>
        <end position="573"/>
    </location>
</feature>
<feature type="compositionally biased region" description="Low complexity" evidence="2">
    <location>
        <begin position="306"/>
        <end position="316"/>
    </location>
</feature>
<feature type="compositionally biased region" description="Basic residues" evidence="2">
    <location>
        <begin position="360"/>
        <end position="373"/>
    </location>
</feature>
<feature type="compositionally biased region" description="Basic and acidic residues" evidence="2">
    <location>
        <begin position="374"/>
        <end position="385"/>
    </location>
</feature>
<feature type="compositionally biased region" description="Low complexity" evidence="2">
    <location>
        <begin position="396"/>
        <end position="409"/>
    </location>
</feature>